<protein>
    <recommendedName>
        <fullName>Annexin A11</fullName>
    </recommendedName>
    <alternativeName>
        <fullName>Annexin XI</fullName>
    </alternativeName>
    <alternativeName>
        <fullName>Annexin-11</fullName>
    </alternativeName>
    <alternativeName>
        <fullName>Calcyclin-associated annexin 50</fullName>
        <shortName>CAP-50</shortName>
    </alternativeName>
</protein>
<organism>
    <name type="scientific">Mus musculus</name>
    <name type="common">Mouse</name>
    <dbReference type="NCBI Taxonomy" id="10090"/>
    <lineage>
        <taxon>Eukaryota</taxon>
        <taxon>Metazoa</taxon>
        <taxon>Chordata</taxon>
        <taxon>Craniata</taxon>
        <taxon>Vertebrata</taxon>
        <taxon>Euteleostomi</taxon>
        <taxon>Mammalia</taxon>
        <taxon>Eutheria</taxon>
        <taxon>Euarchontoglires</taxon>
        <taxon>Glires</taxon>
        <taxon>Rodentia</taxon>
        <taxon>Myomorpha</taxon>
        <taxon>Muroidea</taxon>
        <taxon>Muridae</taxon>
        <taxon>Murinae</taxon>
        <taxon>Mus</taxon>
        <taxon>Mus</taxon>
    </lineage>
</organism>
<dbReference type="EMBL" id="U65986">
    <property type="protein sequence ID" value="AAB42012.1"/>
    <property type="molecule type" value="mRNA"/>
</dbReference>
<dbReference type="EMBL" id="AJ289760">
    <property type="protein sequence ID" value="CAB94770.1"/>
    <property type="molecule type" value="Genomic_DNA"/>
</dbReference>
<dbReference type="EMBL" id="AJ289761">
    <property type="protein sequence ID" value="CAB94770.1"/>
    <property type="status" value="JOINED"/>
    <property type="molecule type" value="Genomic_DNA"/>
</dbReference>
<dbReference type="EMBL" id="AJ289762">
    <property type="protein sequence ID" value="CAB94770.1"/>
    <property type="status" value="JOINED"/>
    <property type="molecule type" value="Genomic_DNA"/>
</dbReference>
<dbReference type="EMBL" id="AJ289763">
    <property type="protein sequence ID" value="CAB94770.1"/>
    <property type="status" value="JOINED"/>
    <property type="molecule type" value="Genomic_DNA"/>
</dbReference>
<dbReference type="EMBL" id="AJ289764">
    <property type="protein sequence ID" value="CAB94770.1"/>
    <property type="status" value="JOINED"/>
    <property type="molecule type" value="Genomic_DNA"/>
</dbReference>
<dbReference type="EMBL" id="AJ289765">
    <property type="protein sequence ID" value="CAB94770.1"/>
    <property type="status" value="JOINED"/>
    <property type="molecule type" value="Genomic_DNA"/>
</dbReference>
<dbReference type="EMBL" id="AJ289766">
    <property type="protein sequence ID" value="CAB94770.1"/>
    <property type="status" value="JOINED"/>
    <property type="molecule type" value="Genomic_DNA"/>
</dbReference>
<dbReference type="EMBL" id="AJ289767">
    <property type="protein sequence ID" value="CAB94770.1"/>
    <property type="status" value="JOINED"/>
    <property type="molecule type" value="Genomic_DNA"/>
</dbReference>
<dbReference type="EMBL" id="AJ289768">
    <property type="protein sequence ID" value="CAB94770.1"/>
    <property type="status" value="JOINED"/>
    <property type="molecule type" value="Genomic_DNA"/>
</dbReference>
<dbReference type="EMBL" id="AJ289769">
    <property type="protein sequence ID" value="CAB94770.1"/>
    <property type="status" value="JOINED"/>
    <property type="molecule type" value="Genomic_DNA"/>
</dbReference>
<dbReference type="EMBL" id="AK140375">
    <property type="protein sequence ID" value="BAE24363.1"/>
    <property type="molecule type" value="mRNA"/>
</dbReference>
<dbReference type="EMBL" id="CT010331">
    <property type="protein sequence ID" value="CAJ18539.1"/>
    <property type="molecule type" value="mRNA"/>
</dbReference>
<dbReference type="EMBL" id="CH466613">
    <property type="protein sequence ID" value="EDL01415.1"/>
    <property type="molecule type" value="Genomic_DNA"/>
</dbReference>
<dbReference type="EMBL" id="BC012875">
    <property type="protein sequence ID" value="AAH12875.1"/>
    <property type="molecule type" value="mRNA"/>
</dbReference>
<dbReference type="CCDS" id="CCDS26875.1"/>
<dbReference type="RefSeq" id="NP_038497.2">
    <property type="nucleotide sequence ID" value="NM_013469.2"/>
</dbReference>
<dbReference type="RefSeq" id="XP_006518514.1">
    <property type="nucleotide sequence ID" value="XM_006518451.5"/>
</dbReference>
<dbReference type="SMR" id="P97384"/>
<dbReference type="BioGRID" id="198108">
    <property type="interactions" value="5"/>
</dbReference>
<dbReference type="FunCoup" id="P97384">
    <property type="interactions" value="1677"/>
</dbReference>
<dbReference type="STRING" id="10090.ENSMUSP00000022416"/>
<dbReference type="GlyGen" id="P97384">
    <property type="glycosylation" value="1 site, 1 O-linked glycan (1 site)"/>
</dbReference>
<dbReference type="iPTMnet" id="P97384"/>
<dbReference type="PhosphoSitePlus" id="P97384"/>
<dbReference type="SwissPalm" id="P97384"/>
<dbReference type="jPOST" id="P97384"/>
<dbReference type="PaxDb" id="10090-ENSMUSP00000022416"/>
<dbReference type="PeptideAtlas" id="P97384"/>
<dbReference type="ProteomicsDB" id="282126"/>
<dbReference type="Antibodypedia" id="3904">
    <property type="antibodies" value="331 antibodies from 40 providers"/>
</dbReference>
<dbReference type="DNASU" id="11744"/>
<dbReference type="Ensembl" id="ENSMUST00000022416.15">
    <property type="protein sequence ID" value="ENSMUSP00000022416.8"/>
    <property type="gene ID" value="ENSMUSG00000021866.16"/>
</dbReference>
<dbReference type="GeneID" id="11744"/>
<dbReference type="KEGG" id="mmu:11744"/>
<dbReference type="UCSC" id="uc007srv.2">
    <property type="organism name" value="mouse"/>
</dbReference>
<dbReference type="AGR" id="MGI:108481"/>
<dbReference type="CTD" id="311"/>
<dbReference type="MGI" id="MGI:108481">
    <property type="gene designation" value="Anxa11"/>
</dbReference>
<dbReference type="VEuPathDB" id="HostDB:ENSMUSG00000021866"/>
<dbReference type="eggNOG" id="KOG0819">
    <property type="taxonomic scope" value="Eukaryota"/>
</dbReference>
<dbReference type="GeneTree" id="ENSGT00940000156914"/>
<dbReference type="HOGENOM" id="CLU_025300_6_0_1"/>
<dbReference type="InParanoid" id="P97384"/>
<dbReference type="OMA" id="GQQPMTY"/>
<dbReference type="OrthoDB" id="37886at2759"/>
<dbReference type="PhylomeDB" id="P97384"/>
<dbReference type="TreeFam" id="TF105452"/>
<dbReference type="BioGRID-ORCS" id="11744">
    <property type="hits" value="1 hit in 79 CRISPR screens"/>
</dbReference>
<dbReference type="ChiTaRS" id="Anxa11">
    <property type="organism name" value="mouse"/>
</dbReference>
<dbReference type="PRO" id="PR:P97384"/>
<dbReference type="Proteomes" id="UP000000589">
    <property type="component" value="Chromosome 14"/>
</dbReference>
<dbReference type="RNAct" id="P97384">
    <property type="molecule type" value="protein"/>
</dbReference>
<dbReference type="Bgee" id="ENSMUSG00000021866">
    <property type="expression patterns" value="Expressed in granulocyte and 113 other cell types or tissues"/>
</dbReference>
<dbReference type="ExpressionAtlas" id="P97384">
    <property type="expression patterns" value="baseline and differential"/>
</dbReference>
<dbReference type="GO" id="GO:0042582">
    <property type="term" value="C:azurophil granule"/>
    <property type="evidence" value="ECO:0007669"/>
    <property type="project" value="Ensembl"/>
</dbReference>
<dbReference type="GO" id="GO:0062023">
    <property type="term" value="C:collagen-containing extracellular matrix"/>
    <property type="evidence" value="ECO:0007005"/>
    <property type="project" value="BHF-UCL"/>
</dbReference>
<dbReference type="GO" id="GO:0005737">
    <property type="term" value="C:cytoplasm"/>
    <property type="evidence" value="ECO:0000314"/>
    <property type="project" value="MGI"/>
</dbReference>
<dbReference type="GO" id="GO:0005829">
    <property type="term" value="C:cytosol"/>
    <property type="evidence" value="ECO:0007669"/>
    <property type="project" value="Ensembl"/>
</dbReference>
<dbReference type="GO" id="GO:0042470">
    <property type="term" value="C:melanosome"/>
    <property type="evidence" value="ECO:0007669"/>
    <property type="project" value="UniProtKB-SubCell"/>
</dbReference>
<dbReference type="GO" id="GO:0030496">
    <property type="term" value="C:midbody"/>
    <property type="evidence" value="ECO:0000250"/>
    <property type="project" value="UniProtKB"/>
</dbReference>
<dbReference type="GO" id="GO:0005635">
    <property type="term" value="C:nuclear envelope"/>
    <property type="evidence" value="ECO:0007669"/>
    <property type="project" value="UniProtKB-SubCell"/>
</dbReference>
<dbReference type="GO" id="GO:0005654">
    <property type="term" value="C:nucleoplasm"/>
    <property type="evidence" value="ECO:0007669"/>
    <property type="project" value="UniProtKB-SubCell"/>
</dbReference>
<dbReference type="GO" id="GO:0045335">
    <property type="term" value="C:phagocytic vesicle"/>
    <property type="evidence" value="ECO:0007669"/>
    <property type="project" value="Ensembl"/>
</dbReference>
<dbReference type="GO" id="GO:0042581">
    <property type="term" value="C:specific granule"/>
    <property type="evidence" value="ECO:0007669"/>
    <property type="project" value="Ensembl"/>
</dbReference>
<dbReference type="GO" id="GO:0005819">
    <property type="term" value="C:spindle"/>
    <property type="evidence" value="ECO:0000250"/>
    <property type="project" value="UniProtKB"/>
</dbReference>
<dbReference type="GO" id="GO:0005509">
    <property type="term" value="F:calcium ion binding"/>
    <property type="evidence" value="ECO:0000314"/>
    <property type="project" value="MGI"/>
</dbReference>
<dbReference type="GO" id="GO:0005544">
    <property type="term" value="F:calcium-dependent phospholipid binding"/>
    <property type="evidence" value="ECO:0000314"/>
    <property type="project" value="MGI"/>
</dbReference>
<dbReference type="GO" id="GO:0048306">
    <property type="term" value="F:calcium-dependent protein binding"/>
    <property type="evidence" value="ECO:0007669"/>
    <property type="project" value="Ensembl"/>
</dbReference>
<dbReference type="GO" id="GO:0008429">
    <property type="term" value="F:phosphatidylethanolamine binding"/>
    <property type="evidence" value="ECO:0000314"/>
    <property type="project" value="MGI"/>
</dbReference>
<dbReference type="GO" id="GO:0044548">
    <property type="term" value="F:S100 protein binding"/>
    <property type="evidence" value="ECO:0000250"/>
    <property type="project" value="UniProtKB"/>
</dbReference>
<dbReference type="GO" id="GO:0032506">
    <property type="term" value="P:cytokinetic process"/>
    <property type="evidence" value="ECO:0000250"/>
    <property type="project" value="UniProtKB"/>
</dbReference>
<dbReference type="GO" id="GO:0006909">
    <property type="term" value="P:phagocytosis"/>
    <property type="evidence" value="ECO:0007669"/>
    <property type="project" value="Ensembl"/>
</dbReference>
<dbReference type="GO" id="GO:0051592">
    <property type="term" value="P:response to calcium ion"/>
    <property type="evidence" value="ECO:0007669"/>
    <property type="project" value="Ensembl"/>
</dbReference>
<dbReference type="FunFam" id="1.10.220.10:FF:000001">
    <property type="entry name" value="Annexin"/>
    <property type="match status" value="1"/>
</dbReference>
<dbReference type="FunFam" id="1.10.220.10:FF:000002">
    <property type="entry name" value="Annexin"/>
    <property type="match status" value="1"/>
</dbReference>
<dbReference type="FunFam" id="1.10.220.10:FF:000003">
    <property type="entry name" value="Annexin"/>
    <property type="match status" value="1"/>
</dbReference>
<dbReference type="FunFam" id="1.10.220.10:FF:000004">
    <property type="entry name" value="Annexin"/>
    <property type="match status" value="1"/>
</dbReference>
<dbReference type="Gene3D" id="1.10.220.10">
    <property type="entry name" value="Annexin"/>
    <property type="match status" value="4"/>
</dbReference>
<dbReference type="InterPro" id="IPR001464">
    <property type="entry name" value="Annexin"/>
</dbReference>
<dbReference type="InterPro" id="IPR018502">
    <property type="entry name" value="Annexin_repeat"/>
</dbReference>
<dbReference type="InterPro" id="IPR018252">
    <property type="entry name" value="Annexin_repeat_CS"/>
</dbReference>
<dbReference type="InterPro" id="IPR037104">
    <property type="entry name" value="Annexin_sf"/>
</dbReference>
<dbReference type="InterPro" id="IPR008157">
    <property type="entry name" value="ANX11"/>
</dbReference>
<dbReference type="PANTHER" id="PTHR10502">
    <property type="entry name" value="ANNEXIN"/>
    <property type="match status" value="1"/>
</dbReference>
<dbReference type="PANTHER" id="PTHR10502:SF29">
    <property type="entry name" value="ANNEXIN A11"/>
    <property type="match status" value="1"/>
</dbReference>
<dbReference type="Pfam" id="PF00191">
    <property type="entry name" value="Annexin"/>
    <property type="match status" value="4"/>
</dbReference>
<dbReference type="PRINTS" id="PR00196">
    <property type="entry name" value="ANNEXIN"/>
</dbReference>
<dbReference type="PRINTS" id="PR01810">
    <property type="entry name" value="ANNEXINXI"/>
</dbReference>
<dbReference type="SMART" id="SM00335">
    <property type="entry name" value="ANX"/>
    <property type="match status" value="4"/>
</dbReference>
<dbReference type="SUPFAM" id="SSF47874">
    <property type="entry name" value="Annexin"/>
    <property type="match status" value="1"/>
</dbReference>
<dbReference type="PROSITE" id="PS00223">
    <property type="entry name" value="ANNEXIN_1"/>
    <property type="match status" value="4"/>
</dbReference>
<dbReference type="PROSITE" id="PS51897">
    <property type="entry name" value="ANNEXIN_2"/>
    <property type="match status" value="4"/>
</dbReference>
<name>ANX11_MOUSE</name>
<comment type="function">
    <text evidence="1">Required for midbody formation and completion of the terminal phase of cytokinesis (By similarity). Binds specifically to calcyclin in a calcium-dependent manner.</text>
</comment>
<comment type="subunit">
    <text evidence="1">Interacts with S100A6. Interacts with PDCD6 in a calcium-dependent manner. Interacts with KIF23 during cytokinesis.</text>
</comment>
<comment type="subcellular location">
    <subcellularLocation>
        <location evidence="1">Cytoplasm</location>
    </subcellularLocation>
    <subcellularLocation>
        <location evidence="1">Melanosome</location>
    </subcellularLocation>
    <subcellularLocation>
        <location evidence="1">Nucleus envelope</location>
    </subcellularLocation>
    <subcellularLocation>
        <location evidence="1">Nucleus</location>
        <location evidence="1">Nucleoplasm</location>
    </subcellularLocation>
    <subcellularLocation>
        <location evidence="1">Cytoplasm</location>
        <location evidence="1">Cytoskeleton</location>
        <location evidence="1">Spindle</location>
    </subcellularLocation>
    <text evidence="1">Found throughout the nucleoplasm at interphase and during mitosis concentrates around the mitotic apparatus. Elevation of intracellular calcium causes relocalization from the nucleoplasm to the nuclear envelope, with little effect on the cytoplasmic pool. Localization to the nuclear envelope is cell-cycle dependent.</text>
</comment>
<comment type="domain">
    <text>A pair of annexin repeats may form one binding site for calcium and phospholipid.</text>
</comment>
<comment type="similarity">
    <text evidence="3 5">Belongs to the annexin family.</text>
</comment>
<reference key="1">
    <citation type="journal article" date="1996" name="Genomics">
        <title>Sequence and chromosomal localization of mouse annexin XI.</title>
        <authorList>
            <person name="Fernandez M.-P."/>
            <person name="Jenkins N.A."/>
            <person name="Gilbert D.J."/>
            <person name="Copeland N.G."/>
            <person name="Morgan R.O."/>
        </authorList>
    </citation>
    <scope>NUCLEOTIDE SEQUENCE [MRNA]</scope>
</reference>
<reference key="2">
    <citation type="journal article" date="2000" name="Genomics">
        <title>Annexin A11 (ANXA11) gene structure as the progenitor of paralogous annexins and source of orthologous cDNA isoforms.</title>
        <authorList>
            <person name="Bances P."/>
            <person name="Fernandez M.R."/>
            <person name="Rodriguez-Garcia M.I."/>
            <person name="Morgan R.O."/>
            <person name="Fernandez M.-P."/>
        </authorList>
    </citation>
    <scope>NUCLEOTIDE SEQUENCE [GENOMIC DNA]</scope>
    <source>
        <strain>129/SvJ</strain>
    </source>
</reference>
<reference key="3">
    <citation type="journal article" date="2005" name="Science">
        <title>The transcriptional landscape of the mammalian genome.</title>
        <authorList>
            <person name="Carninci P."/>
            <person name="Kasukawa T."/>
            <person name="Katayama S."/>
            <person name="Gough J."/>
            <person name="Frith M.C."/>
            <person name="Maeda N."/>
            <person name="Oyama R."/>
            <person name="Ravasi T."/>
            <person name="Lenhard B."/>
            <person name="Wells C."/>
            <person name="Kodzius R."/>
            <person name="Shimokawa K."/>
            <person name="Bajic V.B."/>
            <person name="Brenner S.E."/>
            <person name="Batalov S."/>
            <person name="Forrest A.R."/>
            <person name="Zavolan M."/>
            <person name="Davis M.J."/>
            <person name="Wilming L.G."/>
            <person name="Aidinis V."/>
            <person name="Allen J.E."/>
            <person name="Ambesi-Impiombato A."/>
            <person name="Apweiler R."/>
            <person name="Aturaliya R.N."/>
            <person name="Bailey T.L."/>
            <person name="Bansal M."/>
            <person name="Baxter L."/>
            <person name="Beisel K.W."/>
            <person name="Bersano T."/>
            <person name="Bono H."/>
            <person name="Chalk A.M."/>
            <person name="Chiu K.P."/>
            <person name="Choudhary V."/>
            <person name="Christoffels A."/>
            <person name="Clutterbuck D.R."/>
            <person name="Crowe M.L."/>
            <person name="Dalla E."/>
            <person name="Dalrymple B.P."/>
            <person name="de Bono B."/>
            <person name="Della Gatta G."/>
            <person name="di Bernardo D."/>
            <person name="Down T."/>
            <person name="Engstrom P."/>
            <person name="Fagiolini M."/>
            <person name="Faulkner G."/>
            <person name="Fletcher C.F."/>
            <person name="Fukushima T."/>
            <person name="Furuno M."/>
            <person name="Futaki S."/>
            <person name="Gariboldi M."/>
            <person name="Georgii-Hemming P."/>
            <person name="Gingeras T.R."/>
            <person name="Gojobori T."/>
            <person name="Green R.E."/>
            <person name="Gustincich S."/>
            <person name="Harbers M."/>
            <person name="Hayashi Y."/>
            <person name="Hensch T.K."/>
            <person name="Hirokawa N."/>
            <person name="Hill D."/>
            <person name="Huminiecki L."/>
            <person name="Iacono M."/>
            <person name="Ikeo K."/>
            <person name="Iwama A."/>
            <person name="Ishikawa T."/>
            <person name="Jakt M."/>
            <person name="Kanapin A."/>
            <person name="Katoh M."/>
            <person name="Kawasawa Y."/>
            <person name="Kelso J."/>
            <person name="Kitamura H."/>
            <person name="Kitano H."/>
            <person name="Kollias G."/>
            <person name="Krishnan S.P."/>
            <person name="Kruger A."/>
            <person name="Kummerfeld S.K."/>
            <person name="Kurochkin I.V."/>
            <person name="Lareau L.F."/>
            <person name="Lazarevic D."/>
            <person name="Lipovich L."/>
            <person name="Liu J."/>
            <person name="Liuni S."/>
            <person name="McWilliam S."/>
            <person name="Madan Babu M."/>
            <person name="Madera M."/>
            <person name="Marchionni L."/>
            <person name="Matsuda H."/>
            <person name="Matsuzawa S."/>
            <person name="Miki H."/>
            <person name="Mignone F."/>
            <person name="Miyake S."/>
            <person name="Morris K."/>
            <person name="Mottagui-Tabar S."/>
            <person name="Mulder N."/>
            <person name="Nakano N."/>
            <person name="Nakauchi H."/>
            <person name="Ng P."/>
            <person name="Nilsson R."/>
            <person name="Nishiguchi S."/>
            <person name="Nishikawa S."/>
            <person name="Nori F."/>
            <person name="Ohara O."/>
            <person name="Okazaki Y."/>
            <person name="Orlando V."/>
            <person name="Pang K.C."/>
            <person name="Pavan W.J."/>
            <person name="Pavesi G."/>
            <person name="Pesole G."/>
            <person name="Petrovsky N."/>
            <person name="Piazza S."/>
            <person name="Reed J."/>
            <person name="Reid J.F."/>
            <person name="Ring B.Z."/>
            <person name="Ringwald M."/>
            <person name="Rost B."/>
            <person name="Ruan Y."/>
            <person name="Salzberg S.L."/>
            <person name="Sandelin A."/>
            <person name="Schneider C."/>
            <person name="Schoenbach C."/>
            <person name="Sekiguchi K."/>
            <person name="Semple C.A."/>
            <person name="Seno S."/>
            <person name="Sessa L."/>
            <person name="Sheng Y."/>
            <person name="Shibata Y."/>
            <person name="Shimada H."/>
            <person name="Shimada K."/>
            <person name="Silva D."/>
            <person name="Sinclair B."/>
            <person name="Sperling S."/>
            <person name="Stupka E."/>
            <person name="Sugiura K."/>
            <person name="Sultana R."/>
            <person name="Takenaka Y."/>
            <person name="Taki K."/>
            <person name="Tammoja K."/>
            <person name="Tan S.L."/>
            <person name="Tang S."/>
            <person name="Taylor M.S."/>
            <person name="Tegner J."/>
            <person name="Teichmann S.A."/>
            <person name="Ueda H.R."/>
            <person name="van Nimwegen E."/>
            <person name="Verardo R."/>
            <person name="Wei C.L."/>
            <person name="Yagi K."/>
            <person name="Yamanishi H."/>
            <person name="Zabarovsky E."/>
            <person name="Zhu S."/>
            <person name="Zimmer A."/>
            <person name="Hide W."/>
            <person name="Bult C."/>
            <person name="Grimmond S.M."/>
            <person name="Teasdale R.D."/>
            <person name="Liu E.T."/>
            <person name="Brusic V."/>
            <person name="Quackenbush J."/>
            <person name="Wahlestedt C."/>
            <person name="Mattick J.S."/>
            <person name="Hume D.A."/>
            <person name="Kai C."/>
            <person name="Sasaki D."/>
            <person name="Tomaru Y."/>
            <person name="Fukuda S."/>
            <person name="Kanamori-Katayama M."/>
            <person name="Suzuki M."/>
            <person name="Aoki J."/>
            <person name="Arakawa T."/>
            <person name="Iida J."/>
            <person name="Imamura K."/>
            <person name="Itoh M."/>
            <person name="Kato T."/>
            <person name="Kawaji H."/>
            <person name="Kawagashira N."/>
            <person name="Kawashima T."/>
            <person name="Kojima M."/>
            <person name="Kondo S."/>
            <person name="Konno H."/>
            <person name="Nakano K."/>
            <person name="Ninomiya N."/>
            <person name="Nishio T."/>
            <person name="Okada M."/>
            <person name="Plessy C."/>
            <person name="Shibata K."/>
            <person name="Shiraki T."/>
            <person name="Suzuki S."/>
            <person name="Tagami M."/>
            <person name="Waki K."/>
            <person name="Watahiki A."/>
            <person name="Okamura-Oho Y."/>
            <person name="Suzuki H."/>
            <person name="Kawai J."/>
            <person name="Hayashizaki Y."/>
        </authorList>
    </citation>
    <scope>NUCLEOTIDE SEQUENCE [LARGE SCALE MRNA]</scope>
    <source>
        <strain>C57BL/6J</strain>
        <tissue>Brain cortex</tissue>
    </source>
</reference>
<reference key="4">
    <citation type="submission" date="2005-07" db="EMBL/GenBank/DDBJ databases">
        <title>Cloning of mouse full open reading frames in Gateway(R) system entry vector (pDONR201).</title>
        <authorList>
            <person name="Ebert L."/>
            <person name="Muenstermann E."/>
            <person name="Schatten R."/>
            <person name="Henze S."/>
            <person name="Bohn E."/>
            <person name="Mollenhauer J."/>
            <person name="Wiemann S."/>
            <person name="Schick M."/>
            <person name="Korn B."/>
        </authorList>
    </citation>
    <scope>NUCLEOTIDE SEQUENCE [LARGE SCALE MRNA]</scope>
</reference>
<reference key="5">
    <citation type="submission" date="2005-09" db="EMBL/GenBank/DDBJ databases">
        <authorList>
            <person name="Mural R.J."/>
            <person name="Adams M.D."/>
            <person name="Myers E.W."/>
            <person name="Smith H.O."/>
            <person name="Venter J.C."/>
        </authorList>
    </citation>
    <scope>NUCLEOTIDE SEQUENCE [LARGE SCALE GENOMIC DNA]</scope>
</reference>
<reference key="6">
    <citation type="journal article" date="2004" name="Genome Res.">
        <title>The status, quality, and expansion of the NIH full-length cDNA project: the Mammalian Gene Collection (MGC).</title>
        <authorList>
            <consortium name="The MGC Project Team"/>
        </authorList>
    </citation>
    <scope>NUCLEOTIDE SEQUENCE [LARGE SCALE MRNA]</scope>
    <source>
        <strain>FVB/N</strain>
        <tissue>Mammary tumor</tissue>
    </source>
</reference>
<reference key="7">
    <citation type="journal article" date="2010" name="Cell">
        <title>A tissue-specific atlas of mouse protein phosphorylation and expression.</title>
        <authorList>
            <person name="Huttlin E.L."/>
            <person name="Jedrychowski M.P."/>
            <person name="Elias J.E."/>
            <person name="Goswami T."/>
            <person name="Rad R."/>
            <person name="Beausoleil S.A."/>
            <person name="Villen J."/>
            <person name="Haas W."/>
            <person name="Sowa M.E."/>
            <person name="Gygi S.P."/>
        </authorList>
    </citation>
    <scope>IDENTIFICATION BY MASS SPECTROMETRY [LARGE SCALE ANALYSIS]</scope>
    <source>
        <tissue>Brain</tissue>
        <tissue>Brown adipose tissue</tissue>
        <tissue>Heart</tissue>
        <tissue>Kidney</tissue>
        <tissue>Liver</tissue>
        <tissue>Lung</tissue>
        <tissue>Pancreas</tissue>
        <tissue>Spleen</tissue>
        <tissue>Testis</tissue>
    </source>
</reference>
<gene>
    <name type="primary">Anxa11</name>
    <name type="synonym">Anx11</name>
</gene>
<proteinExistence type="evidence at protein level"/>
<accession>P97384</accession>
<accession>Q921F1</accession>
<keyword id="KW-0007">Acetylation</keyword>
<keyword id="KW-0041">Annexin</keyword>
<keyword id="KW-0106">Calcium</keyword>
<keyword id="KW-0111">Calcium/phospholipid-binding</keyword>
<keyword id="KW-0131">Cell cycle</keyword>
<keyword id="KW-0132">Cell division</keyword>
<keyword id="KW-0963">Cytoplasm</keyword>
<keyword id="KW-0206">Cytoskeleton</keyword>
<keyword id="KW-0539">Nucleus</keyword>
<keyword id="KW-1185">Reference proteome</keyword>
<keyword id="KW-0677">Repeat</keyword>
<evidence type="ECO:0000250" key="1"/>
<evidence type="ECO:0000250" key="2">
    <source>
        <dbReference type="UniProtKB" id="P50995"/>
    </source>
</evidence>
<evidence type="ECO:0000255" key="3">
    <source>
        <dbReference type="PROSITE-ProRule" id="PRU01245"/>
    </source>
</evidence>
<evidence type="ECO:0000256" key="4">
    <source>
        <dbReference type="SAM" id="MobiDB-lite"/>
    </source>
</evidence>
<evidence type="ECO:0000305" key="5"/>
<sequence>MSYPGYPPPAGGYPPAAPGGGPWGGAGYPPPSMPPIGLDNVANYAGQFNQDYLSGMAANMSGTFGGANVPNLYPGAPGGGYPPVPPGGFGQPPPAQQPVPPYGMYPPPGGNPPPGMPSYPAYPGAPVPGQPMPPTGQQPPGAYPGQPPMTYPGQSPMPPPGQQPVPSYPGYSGSSTITPAVPPAQFGNRGTITAASGFDPLRDAEVLRKAMKGFGTDEQAIIDCLGSRSNKQRQQILLSFKTAYGKDLIKDLKSELSGNFEKTILALMKTPVLFDVYEIKEAIKGAGTDEACLIEIFASRSNEHIRELSRAYKTEFQKTLEEAIRSDTSGHFQRLLISLSQGNRDESTNVDMSLVQRDVQELYAAGENRLGTDESKFNAILCSRSRAHLVAVFNEYQRMTGRDIEKSICREMSGDLEQGMLAVVKCLKNTPAFFAERLNKAMRGAGTKDRTLIRIMVSRSELDLLDIRAEYKRMYGKSLYHDITGDTSGDYRKILLKICGGND</sequence>
<feature type="chain" id="PRO_0000067511" description="Annexin A11">
    <location>
        <begin position="1"/>
        <end position="503"/>
    </location>
</feature>
<feature type="repeat" description="Annexin 1" evidence="3">
    <location>
        <begin position="198"/>
        <end position="269"/>
    </location>
</feature>
<feature type="repeat" description="Annexin 2" evidence="3">
    <location>
        <begin position="270"/>
        <end position="341"/>
    </location>
</feature>
<feature type="repeat" description="Annexin 3" evidence="3">
    <location>
        <begin position="353"/>
        <end position="425"/>
    </location>
</feature>
<feature type="repeat" description="Annexin 4" evidence="3">
    <location>
        <begin position="429"/>
        <end position="500"/>
    </location>
</feature>
<feature type="region of interest" description="Disordered" evidence="4">
    <location>
        <begin position="80"/>
        <end position="172"/>
    </location>
</feature>
<feature type="compositionally biased region" description="Pro residues" evidence="4">
    <location>
        <begin position="80"/>
        <end position="117"/>
    </location>
</feature>
<feature type="compositionally biased region" description="Pro residues" evidence="4">
    <location>
        <begin position="123"/>
        <end position="167"/>
    </location>
</feature>
<feature type="modified residue" description="N6-acetyllysine" evidence="2">
    <location>
        <position position="246"/>
    </location>
</feature>
<feature type="modified residue" description="N6-acetyllysine" evidence="2">
    <location>
        <position position="253"/>
    </location>
</feature>
<feature type="modified residue" description="N6-acetyllysine" evidence="2">
    <location>
        <position position="477"/>
    </location>
</feature>
<feature type="sequence conflict" description="In Ref. 1; AAB42012 and 2; CAB94770." evidence="5" ref="1 2">
    <original>V</original>
    <variation>M</variation>
    <location>
        <position position="69"/>
    </location>
</feature>